<proteinExistence type="inferred from homology"/>
<reference key="1">
    <citation type="journal article" date="2002" name="Nature">
        <title>Comparison of the genomes of two Xanthomonas pathogens with differing host specificities.</title>
        <authorList>
            <person name="da Silva A.C.R."/>
            <person name="Ferro J.A."/>
            <person name="Reinach F.C."/>
            <person name="Farah C.S."/>
            <person name="Furlan L.R."/>
            <person name="Quaggio R.B."/>
            <person name="Monteiro-Vitorello C.B."/>
            <person name="Van Sluys M.A."/>
            <person name="Almeida N.F. Jr."/>
            <person name="Alves L.M.C."/>
            <person name="do Amaral A.M."/>
            <person name="Bertolini M.C."/>
            <person name="Camargo L.E.A."/>
            <person name="Camarotte G."/>
            <person name="Cannavan F."/>
            <person name="Cardozo J."/>
            <person name="Chambergo F."/>
            <person name="Ciapina L.P."/>
            <person name="Cicarelli R.M.B."/>
            <person name="Coutinho L.L."/>
            <person name="Cursino-Santos J.R."/>
            <person name="El-Dorry H."/>
            <person name="Faria J.B."/>
            <person name="Ferreira A.J.S."/>
            <person name="Ferreira R.C.C."/>
            <person name="Ferro M.I.T."/>
            <person name="Formighieri E.F."/>
            <person name="Franco M.C."/>
            <person name="Greggio C.C."/>
            <person name="Gruber A."/>
            <person name="Katsuyama A.M."/>
            <person name="Kishi L.T."/>
            <person name="Leite R.P."/>
            <person name="Lemos E.G.M."/>
            <person name="Lemos M.V.F."/>
            <person name="Locali E.C."/>
            <person name="Machado M.A."/>
            <person name="Madeira A.M.B.N."/>
            <person name="Martinez-Rossi N.M."/>
            <person name="Martins E.C."/>
            <person name="Meidanis J."/>
            <person name="Menck C.F.M."/>
            <person name="Miyaki C.Y."/>
            <person name="Moon D.H."/>
            <person name="Moreira L.M."/>
            <person name="Novo M.T.M."/>
            <person name="Okura V.K."/>
            <person name="Oliveira M.C."/>
            <person name="Oliveira V.R."/>
            <person name="Pereira H.A."/>
            <person name="Rossi A."/>
            <person name="Sena J.A.D."/>
            <person name="Silva C."/>
            <person name="de Souza R.F."/>
            <person name="Spinola L.A.F."/>
            <person name="Takita M.A."/>
            <person name="Tamura R.E."/>
            <person name="Teixeira E.C."/>
            <person name="Tezza R.I.D."/>
            <person name="Trindade dos Santos M."/>
            <person name="Truffi D."/>
            <person name="Tsai S.M."/>
            <person name="White F.F."/>
            <person name="Setubal J.C."/>
            <person name="Kitajima J.P."/>
        </authorList>
    </citation>
    <scope>NUCLEOTIDE SEQUENCE [LARGE SCALE GENOMIC DNA]</scope>
    <source>
        <strain>306</strain>
    </source>
</reference>
<dbReference type="EC" id="2.1.1.192" evidence="1"/>
<dbReference type="EMBL" id="AE008923">
    <property type="protein sequence ID" value="AAM36878.1"/>
    <property type="status" value="ALT_INIT"/>
    <property type="molecule type" value="Genomic_DNA"/>
</dbReference>
<dbReference type="SMR" id="Q8PKZ1"/>
<dbReference type="KEGG" id="xac:XAC2016"/>
<dbReference type="eggNOG" id="COG0820">
    <property type="taxonomic scope" value="Bacteria"/>
</dbReference>
<dbReference type="HOGENOM" id="CLU_029101_0_0_6"/>
<dbReference type="Proteomes" id="UP000000576">
    <property type="component" value="Chromosome"/>
</dbReference>
<dbReference type="GO" id="GO:0005737">
    <property type="term" value="C:cytoplasm"/>
    <property type="evidence" value="ECO:0007669"/>
    <property type="project" value="UniProtKB-SubCell"/>
</dbReference>
<dbReference type="GO" id="GO:0051539">
    <property type="term" value="F:4 iron, 4 sulfur cluster binding"/>
    <property type="evidence" value="ECO:0007669"/>
    <property type="project" value="UniProtKB-UniRule"/>
</dbReference>
<dbReference type="GO" id="GO:0046872">
    <property type="term" value="F:metal ion binding"/>
    <property type="evidence" value="ECO:0007669"/>
    <property type="project" value="UniProtKB-KW"/>
</dbReference>
<dbReference type="GO" id="GO:0070040">
    <property type="term" value="F:rRNA (adenine(2503)-C2-)-methyltransferase activity"/>
    <property type="evidence" value="ECO:0007669"/>
    <property type="project" value="UniProtKB-UniRule"/>
</dbReference>
<dbReference type="GO" id="GO:0019843">
    <property type="term" value="F:rRNA binding"/>
    <property type="evidence" value="ECO:0007669"/>
    <property type="project" value="UniProtKB-UniRule"/>
</dbReference>
<dbReference type="GO" id="GO:0002935">
    <property type="term" value="F:tRNA (adenine(37)-C2)-methyltransferase activity"/>
    <property type="evidence" value="ECO:0007669"/>
    <property type="project" value="UniProtKB-UniRule"/>
</dbReference>
<dbReference type="GO" id="GO:0000049">
    <property type="term" value="F:tRNA binding"/>
    <property type="evidence" value="ECO:0007669"/>
    <property type="project" value="UniProtKB-UniRule"/>
</dbReference>
<dbReference type="GO" id="GO:0070475">
    <property type="term" value="P:rRNA base methylation"/>
    <property type="evidence" value="ECO:0007669"/>
    <property type="project" value="UniProtKB-UniRule"/>
</dbReference>
<dbReference type="GO" id="GO:0030488">
    <property type="term" value="P:tRNA methylation"/>
    <property type="evidence" value="ECO:0007669"/>
    <property type="project" value="UniProtKB-UniRule"/>
</dbReference>
<dbReference type="CDD" id="cd01335">
    <property type="entry name" value="Radical_SAM"/>
    <property type="match status" value="1"/>
</dbReference>
<dbReference type="FunFam" id="1.10.150.530:FF:000003">
    <property type="entry name" value="Dual-specificity RNA methyltransferase RlmN"/>
    <property type="match status" value="1"/>
</dbReference>
<dbReference type="FunFam" id="3.20.20.70:FF:000008">
    <property type="entry name" value="Dual-specificity RNA methyltransferase RlmN"/>
    <property type="match status" value="1"/>
</dbReference>
<dbReference type="Gene3D" id="1.10.150.530">
    <property type="match status" value="1"/>
</dbReference>
<dbReference type="Gene3D" id="3.20.20.70">
    <property type="entry name" value="Aldolase class I"/>
    <property type="match status" value="1"/>
</dbReference>
<dbReference type="HAMAP" id="MF_01849">
    <property type="entry name" value="RNA_methyltr_RlmN"/>
    <property type="match status" value="1"/>
</dbReference>
<dbReference type="InterPro" id="IPR013785">
    <property type="entry name" value="Aldolase_TIM"/>
</dbReference>
<dbReference type="InterPro" id="IPR040072">
    <property type="entry name" value="Methyltransferase_A"/>
</dbReference>
<dbReference type="InterPro" id="IPR048641">
    <property type="entry name" value="RlmN_N"/>
</dbReference>
<dbReference type="InterPro" id="IPR027492">
    <property type="entry name" value="RNA_MTrfase_RlmN"/>
</dbReference>
<dbReference type="InterPro" id="IPR004383">
    <property type="entry name" value="rRNA_lsu_MTrfase_RlmN/Cfr"/>
</dbReference>
<dbReference type="InterPro" id="IPR007197">
    <property type="entry name" value="rSAM"/>
</dbReference>
<dbReference type="NCBIfam" id="TIGR00048">
    <property type="entry name" value="rRNA_mod_RlmN"/>
    <property type="match status" value="1"/>
</dbReference>
<dbReference type="PANTHER" id="PTHR30544">
    <property type="entry name" value="23S RRNA METHYLTRANSFERASE"/>
    <property type="match status" value="1"/>
</dbReference>
<dbReference type="PANTHER" id="PTHR30544:SF5">
    <property type="entry name" value="RADICAL SAM CORE DOMAIN-CONTAINING PROTEIN"/>
    <property type="match status" value="1"/>
</dbReference>
<dbReference type="Pfam" id="PF04055">
    <property type="entry name" value="Radical_SAM"/>
    <property type="match status" value="1"/>
</dbReference>
<dbReference type="Pfam" id="PF21016">
    <property type="entry name" value="RlmN_N"/>
    <property type="match status" value="1"/>
</dbReference>
<dbReference type="PIRSF" id="PIRSF006004">
    <property type="entry name" value="CHP00048"/>
    <property type="match status" value="1"/>
</dbReference>
<dbReference type="SFLD" id="SFLDF00275">
    <property type="entry name" value="adenosine_C2_methyltransferase"/>
    <property type="match status" value="1"/>
</dbReference>
<dbReference type="SFLD" id="SFLDG01062">
    <property type="entry name" value="methyltransferase_(Class_A)"/>
    <property type="match status" value="1"/>
</dbReference>
<dbReference type="SUPFAM" id="SSF102114">
    <property type="entry name" value="Radical SAM enzymes"/>
    <property type="match status" value="1"/>
</dbReference>
<dbReference type="PROSITE" id="PS51918">
    <property type="entry name" value="RADICAL_SAM"/>
    <property type="match status" value="1"/>
</dbReference>
<organism>
    <name type="scientific">Xanthomonas axonopodis pv. citri (strain 306)</name>
    <dbReference type="NCBI Taxonomy" id="190486"/>
    <lineage>
        <taxon>Bacteria</taxon>
        <taxon>Pseudomonadati</taxon>
        <taxon>Pseudomonadota</taxon>
        <taxon>Gammaproteobacteria</taxon>
        <taxon>Lysobacterales</taxon>
        <taxon>Lysobacteraceae</taxon>
        <taxon>Xanthomonas</taxon>
    </lineage>
</organism>
<protein>
    <recommendedName>
        <fullName evidence="1">Dual-specificity RNA methyltransferase RlmN</fullName>
        <ecNumber evidence="1">2.1.1.192</ecNumber>
    </recommendedName>
    <alternativeName>
        <fullName evidence="1">23S rRNA (adenine(2503)-C(2))-methyltransferase</fullName>
    </alternativeName>
    <alternativeName>
        <fullName evidence="1">23S rRNA m2A2503 methyltransferase</fullName>
    </alternativeName>
    <alternativeName>
        <fullName evidence="1">Ribosomal RNA large subunit methyltransferase N</fullName>
    </alternativeName>
    <alternativeName>
        <fullName evidence="1">tRNA (adenine(37)-C(2))-methyltransferase</fullName>
    </alternativeName>
    <alternativeName>
        <fullName evidence="1">tRNA m2A37 methyltransferase</fullName>
    </alternativeName>
</protein>
<keyword id="KW-0004">4Fe-4S</keyword>
<keyword id="KW-0963">Cytoplasm</keyword>
<keyword id="KW-1015">Disulfide bond</keyword>
<keyword id="KW-0408">Iron</keyword>
<keyword id="KW-0411">Iron-sulfur</keyword>
<keyword id="KW-0479">Metal-binding</keyword>
<keyword id="KW-0489">Methyltransferase</keyword>
<keyword id="KW-0698">rRNA processing</keyword>
<keyword id="KW-0949">S-adenosyl-L-methionine</keyword>
<keyword id="KW-0808">Transferase</keyword>
<keyword id="KW-0819">tRNA processing</keyword>
<evidence type="ECO:0000255" key="1">
    <source>
        <dbReference type="HAMAP-Rule" id="MF_01849"/>
    </source>
</evidence>
<evidence type="ECO:0000255" key="2">
    <source>
        <dbReference type="PROSITE-ProRule" id="PRU01266"/>
    </source>
</evidence>
<evidence type="ECO:0000305" key="3"/>
<name>RLMN_XANAC</name>
<comment type="function">
    <text evidence="1">Specifically methylates position 2 of adenine 2503 in 23S rRNA and position 2 of adenine 37 in tRNAs. m2A2503 modification seems to play a crucial role in the proofreading step occurring at the peptidyl transferase center and thus would serve to optimize ribosomal fidelity.</text>
</comment>
<comment type="catalytic activity">
    <reaction evidence="1">
        <text>adenosine(2503) in 23S rRNA + 2 reduced [2Fe-2S]-[ferredoxin] + 2 S-adenosyl-L-methionine = 2-methyladenosine(2503) in 23S rRNA + 5'-deoxyadenosine + L-methionine + 2 oxidized [2Fe-2S]-[ferredoxin] + S-adenosyl-L-homocysteine</text>
        <dbReference type="Rhea" id="RHEA:42916"/>
        <dbReference type="Rhea" id="RHEA-COMP:10000"/>
        <dbReference type="Rhea" id="RHEA-COMP:10001"/>
        <dbReference type="Rhea" id="RHEA-COMP:10152"/>
        <dbReference type="Rhea" id="RHEA-COMP:10282"/>
        <dbReference type="ChEBI" id="CHEBI:17319"/>
        <dbReference type="ChEBI" id="CHEBI:33737"/>
        <dbReference type="ChEBI" id="CHEBI:33738"/>
        <dbReference type="ChEBI" id="CHEBI:57844"/>
        <dbReference type="ChEBI" id="CHEBI:57856"/>
        <dbReference type="ChEBI" id="CHEBI:59789"/>
        <dbReference type="ChEBI" id="CHEBI:74411"/>
        <dbReference type="ChEBI" id="CHEBI:74497"/>
        <dbReference type="EC" id="2.1.1.192"/>
    </reaction>
</comment>
<comment type="catalytic activity">
    <reaction evidence="1">
        <text>adenosine(37) in tRNA + 2 reduced [2Fe-2S]-[ferredoxin] + 2 S-adenosyl-L-methionine = 2-methyladenosine(37) in tRNA + 5'-deoxyadenosine + L-methionine + 2 oxidized [2Fe-2S]-[ferredoxin] + S-adenosyl-L-homocysteine</text>
        <dbReference type="Rhea" id="RHEA:43332"/>
        <dbReference type="Rhea" id="RHEA-COMP:10000"/>
        <dbReference type="Rhea" id="RHEA-COMP:10001"/>
        <dbReference type="Rhea" id="RHEA-COMP:10162"/>
        <dbReference type="Rhea" id="RHEA-COMP:10485"/>
        <dbReference type="ChEBI" id="CHEBI:17319"/>
        <dbReference type="ChEBI" id="CHEBI:33737"/>
        <dbReference type="ChEBI" id="CHEBI:33738"/>
        <dbReference type="ChEBI" id="CHEBI:57844"/>
        <dbReference type="ChEBI" id="CHEBI:57856"/>
        <dbReference type="ChEBI" id="CHEBI:59789"/>
        <dbReference type="ChEBI" id="CHEBI:74411"/>
        <dbReference type="ChEBI" id="CHEBI:74497"/>
        <dbReference type="EC" id="2.1.1.192"/>
    </reaction>
</comment>
<comment type="cofactor">
    <cofactor evidence="1">
        <name>[4Fe-4S] cluster</name>
        <dbReference type="ChEBI" id="CHEBI:49883"/>
    </cofactor>
    <text evidence="1">Binds 1 [4Fe-4S] cluster. The cluster is coordinated with 3 cysteines and an exchangeable S-adenosyl-L-methionine.</text>
</comment>
<comment type="subcellular location">
    <subcellularLocation>
        <location evidence="1">Cytoplasm</location>
    </subcellularLocation>
</comment>
<comment type="miscellaneous">
    <text evidence="1">Reaction proceeds by a ping-pong mechanism involving intermediate methylation of a conserved cysteine residue.</text>
</comment>
<comment type="similarity">
    <text evidence="1">Belongs to the radical SAM superfamily. RlmN family.</text>
</comment>
<comment type="sequence caution" evidence="3">
    <conflict type="erroneous initiation">
        <sequence resource="EMBL-CDS" id="AAM36878"/>
    </conflict>
</comment>
<accession>Q8PKZ1</accession>
<sequence length="401" mass="44904">MNEVVIPSVLQDGSVRTPEPRKQNLLDLDREGLERFFADTLGEARYRAHQVMKWIHHRYVTDFDQMTDLGKALRAKLHQHAEVLVPNVVFDKPSADGTHKWLLAMGTDGKNAIETVYIPDKGRGTLCVSSQVGCGLNCSFCSTATQGFNRNLTTAEIIGQVWVAARHLGNVPHQQRRLTNVVMMGMGEPLMNFDNVVRAMSVMRDDLGYGLASKRVTLSTSGLVPMIDRLSTESDVSLAVSLHAANDALRESLVPLNKKYPIAELMESCARYLRGSKKRDSVTFEYTLMKGINDQPEHARQLARLMRQFDNAVQSKDAGKVNLIPFNPFPGTRYERSGETEIRAFQKILLDAQVLTMVRRTRGDDIDAACGQLKGQVMDRTRRQAEFRRTLEGQADRDAAA</sequence>
<gene>
    <name evidence="1" type="primary">rlmN</name>
    <name type="ordered locus">XAC2016</name>
</gene>
<feature type="chain" id="PRO_0000350525" description="Dual-specificity RNA methyltransferase RlmN">
    <location>
        <begin position="1"/>
        <end position="401"/>
    </location>
</feature>
<feature type="domain" description="Radical SAM core" evidence="2">
    <location>
        <begin position="120"/>
        <end position="365"/>
    </location>
</feature>
<feature type="active site" description="Proton acceptor" evidence="1">
    <location>
        <position position="114"/>
    </location>
</feature>
<feature type="active site" description="S-methylcysteine intermediate" evidence="1">
    <location>
        <position position="370"/>
    </location>
</feature>
<feature type="binding site" evidence="1">
    <location>
        <position position="134"/>
    </location>
    <ligand>
        <name>[4Fe-4S] cluster</name>
        <dbReference type="ChEBI" id="CHEBI:49883"/>
        <note>4Fe-4S-S-AdoMet</note>
    </ligand>
</feature>
<feature type="binding site" evidence="1">
    <location>
        <position position="138"/>
    </location>
    <ligand>
        <name>[4Fe-4S] cluster</name>
        <dbReference type="ChEBI" id="CHEBI:49883"/>
        <note>4Fe-4S-S-AdoMet</note>
    </ligand>
</feature>
<feature type="binding site" evidence="1">
    <location>
        <position position="141"/>
    </location>
    <ligand>
        <name>[4Fe-4S] cluster</name>
        <dbReference type="ChEBI" id="CHEBI:49883"/>
        <note>4Fe-4S-S-AdoMet</note>
    </ligand>
</feature>
<feature type="binding site" evidence="1">
    <location>
        <begin position="187"/>
        <end position="188"/>
    </location>
    <ligand>
        <name>S-adenosyl-L-methionine</name>
        <dbReference type="ChEBI" id="CHEBI:59789"/>
    </ligand>
</feature>
<feature type="binding site" evidence="1">
    <location>
        <position position="219"/>
    </location>
    <ligand>
        <name>S-adenosyl-L-methionine</name>
        <dbReference type="ChEBI" id="CHEBI:59789"/>
    </ligand>
</feature>
<feature type="binding site" evidence="1">
    <location>
        <begin position="241"/>
        <end position="243"/>
    </location>
    <ligand>
        <name>S-adenosyl-L-methionine</name>
        <dbReference type="ChEBI" id="CHEBI:59789"/>
    </ligand>
</feature>
<feature type="binding site" evidence="1">
    <location>
        <position position="327"/>
    </location>
    <ligand>
        <name>S-adenosyl-L-methionine</name>
        <dbReference type="ChEBI" id="CHEBI:59789"/>
    </ligand>
</feature>
<feature type="disulfide bond" description="(transient)" evidence="1">
    <location>
        <begin position="127"/>
        <end position="370"/>
    </location>
</feature>